<keyword id="KW-0002">3D-structure</keyword>
<keyword id="KW-0963">Cytoplasm</keyword>
<keyword id="KW-0255">Endonuclease</keyword>
<keyword id="KW-0378">Hydrolase</keyword>
<keyword id="KW-0460">Magnesium</keyword>
<keyword id="KW-0540">Nuclease</keyword>
<keyword id="KW-1185">Reference proteome</keyword>
<keyword id="KW-0690">Ribosome biogenesis</keyword>
<keyword id="KW-0694">RNA-binding</keyword>
<keyword id="KW-0698">rRNA processing</keyword>
<keyword id="KW-0699">rRNA-binding</keyword>
<protein>
    <recommendedName>
        <fullName evidence="1">Mini-ribonuclease 3</fullName>
        <shortName evidence="1">Mini-3</shortName>
        <shortName evidence="1">Mini-RNase 3</shortName>
        <ecNumber evidence="1">3.1.26.-</ecNumber>
    </recommendedName>
    <alternativeName>
        <fullName evidence="1">Mini-RNase III</fullName>
        <shortName evidence="1">Mini-III</shortName>
    </alternativeName>
</protein>
<dbReference type="EC" id="3.1.26.-" evidence="1"/>
<dbReference type="EMBL" id="AE016877">
    <property type="protein sequence ID" value="AAP07193.1"/>
    <property type="molecule type" value="Genomic_DNA"/>
</dbReference>
<dbReference type="RefSeq" id="NP_829992.1">
    <property type="nucleotide sequence ID" value="NC_004722.1"/>
</dbReference>
<dbReference type="RefSeq" id="WP_000564262.1">
    <property type="nucleotide sequence ID" value="NC_004722.1"/>
</dbReference>
<dbReference type="PDB" id="1U61">
    <property type="method" value="X-ray"/>
    <property type="resolution" value="2.15 A"/>
    <property type="chains" value="A=1-135"/>
</dbReference>
<dbReference type="PDBsum" id="1U61"/>
<dbReference type="SMR" id="Q81J58"/>
<dbReference type="STRING" id="226900.BC_0111"/>
<dbReference type="KEGG" id="bce:BC0111"/>
<dbReference type="PATRIC" id="fig|226900.8.peg.113"/>
<dbReference type="HOGENOM" id="CLU_091169_2_0_9"/>
<dbReference type="OrthoDB" id="46571at2"/>
<dbReference type="EvolutionaryTrace" id="Q81J58"/>
<dbReference type="Proteomes" id="UP000001417">
    <property type="component" value="Chromosome"/>
</dbReference>
<dbReference type="GO" id="GO:0005737">
    <property type="term" value="C:cytoplasm"/>
    <property type="evidence" value="ECO:0007669"/>
    <property type="project" value="UniProtKB-SubCell"/>
</dbReference>
<dbReference type="GO" id="GO:0004525">
    <property type="term" value="F:ribonuclease III activity"/>
    <property type="evidence" value="ECO:0007669"/>
    <property type="project" value="InterPro"/>
</dbReference>
<dbReference type="GO" id="GO:0019843">
    <property type="term" value="F:rRNA binding"/>
    <property type="evidence" value="ECO:0007669"/>
    <property type="project" value="UniProtKB-UniRule"/>
</dbReference>
<dbReference type="GO" id="GO:0006364">
    <property type="term" value="P:rRNA processing"/>
    <property type="evidence" value="ECO:0007669"/>
    <property type="project" value="UniProtKB-UniRule"/>
</dbReference>
<dbReference type="CDD" id="cd00593">
    <property type="entry name" value="RIBOc"/>
    <property type="match status" value="1"/>
</dbReference>
<dbReference type="Gene3D" id="1.10.1520.10">
    <property type="entry name" value="Ribonuclease III domain"/>
    <property type="match status" value="1"/>
</dbReference>
<dbReference type="HAMAP" id="MF_01468">
    <property type="entry name" value="RNase_Mini_III"/>
    <property type="match status" value="1"/>
</dbReference>
<dbReference type="InterPro" id="IPR008226">
    <property type="entry name" value="Mini3_fam"/>
</dbReference>
<dbReference type="InterPro" id="IPR000999">
    <property type="entry name" value="RNase_III_dom"/>
</dbReference>
<dbReference type="InterPro" id="IPR036389">
    <property type="entry name" value="RNase_III_sf"/>
</dbReference>
<dbReference type="PANTHER" id="PTHR34276">
    <property type="entry name" value="MINI-RIBONUCLEASE 3"/>
    <property type="match status" value="1"/>
</dbReference>
<dbReference type="PANTHER" id="PTHR34276:SF1">
    <property type="entry name" value="MINI-RIBONUCLEASE 3"/>
    <property type="match status" value="1"/>
</dbReference>
<dbReference type="Pfam" id="PF00636">
    <property type="entry name" value="Ribonuclease_3"/>
    <property type="match status" value="1"/>
</dbReference>
<dbReference type="PIRSF" id="PIRSF005520">
    <property type="entry name" value="UCP005520"/>
    <property type="match status" value="1"/>
</dbReference>
<dbReference type="SMART" id="SM00535">
    <property type="entry name" value="RIBOc"/>
    <property type="match status" value="1"/>
</dbReference>
<dbReference type="SUPFAM" id="SSF69065">
    <property type="entry name" value="RNase III domain-like"/>
    <property type="match status" value="1"/>
</dbReference>
<reference key="1">
    <citation type="journal article" date="2003" name="Nature">
        <title>Genome sequence of Bacillus cereus and comparative analysis with Bacillus anthracis.</title>
        <authorList>
            <person name="Ivanova N."/>
            <person name="Sorokin A."/>
            <person name="Anderson I."/>
            <person name="Galleron N."/>
            <person name="Candelon B."/>
            <person name="Kapatral V."/>
            <person name="Bhattacharyya A."/>
            <person name="Reznik G."/>
            <person name="Mikhailova N."/>
            <person name="Lapidus A."/>
            <person name="Chu L."/>
            <person name="Mazur M."/>
            <person name="Goltsman E."/>
            <person name="Larsen N."/>
            <person name="D'Souza M."/>
            <person name="Walunas T."/>
            <person name="Grechkin Y."/>
            <person name="Pusch G."/>
            <person name="Haselkorn R."/>
            <person name="Fonstein M."/>
            <person name="Ehrlich S.D."/>
            <person name="Overbeek R."/>
            <person name="Kyrpides N.C."/>
        </authorList>
    </citation>
    <scope>NUCLEOTIDE SEQUENCE [LARGE SCALE GENOMIC DNA]</scope>
    <source>
        <strain>ATCC 14579 / DSM 31 / CCUG 7414 / JCM 2152 / NBRC 15305 / NCIMB 9373 / NCTC 2599 / NRRL B-3711</strain>
    </source>
</reference>
<reference key="2">
    <citation type="submission" date="2004-07" db="PDB data bank">
        <title>X-ray crystal structure of conserved hypothetical protein from Bacillus cereus.</title>
        <authorList>
            <person name="Osipiuk J."/>
            <person name="Quartey P."/>
            <person name="Moy S."/>
            <person name="Collart F."/>
            <person name="Joachimiak A."/>
        </authorList>
    </citation>
    <scope>X-RAY CRYSTALLOGRAPHY (2.15 ANGSTROMS)</scope>
    <source>
        <strain>ATCC 14579 / DSM 31 / CCUG 7414 / JCM 2152 / NBRC 15305 / NCIMB 9373 / NCTC 2599 / NRRL B-3711</strain>
    </source>
</reference>
<proteinExistence type="evidence at protein level"/>
<feature type="chain" id="PRO_0000415980" description="Mini-ribonuclease 3">
    <location>
        <begin position="1"/>
        <end position="135"/>
    </location>
</feature>
<feature type="active site" evidence="1">
    <location>
        <position position="17"/>
    </location>
</feature>
<feature type="turn" evidence="2">
    <location>
        <begin position="4"/>
        <end position="6"/>
    </location>
</feature>
<feature type="helix" evidence="2">
    <location>
        <begin position="9"/>
        <end position="31"/>
    </location>
</feature>
<feature type="helix" evidence="2">
    <location>
        <begin position="36"/>
        <end position="38"/>
    </location>
</feature>
<feature type="helix" evidence="2">
    <location>
        <begin position="39"/>
        <end position="47"/>
    </location>
</feature>
<feature type="helix" evidence="2">
    <location>
        <begin position="49"/>
        <end position="61"/>
    </location>
</feature>
<feature type="helix" evidence="2">
    <location>
        <begin position="67"/>
        <end position="76"/>
    </location>
</feature>
<feature type="helix" evidence="2">
    <location>
        <begin position="90"/>
        <end position="108"/>
    </location>
</feature>
<feature type="helix" evidence="2">
    <location>
        <begin position="112"/>
        <end position="127"/>
    </location>
</feature>
<comment type="function">
    <text evidence="1">Involved in correct processing of both the 5' and 3' ends of 23S rRNA precursor. Processes 30S rRNA precursor transcript even in absence of ribonuclease 3 (Rnc); Rnc processes 30S rRNA into smaller rRNA precursors.</text>
</comment>
<comment type="cofactor">
    <cofactor evidence="1">
        <name>Mg(2+)</name>
        <dbReference type="ChEBI" id="CHEBI:18420"/>
    </cofactor>
</comment>
<comment type="subunit">
    <text evidence="1">Homodimer.</text>
</comment>
<comment type="subcellular location">
    <subcellularLocation>
        <location evidence="1">Cytoplasm</location>
    </subcellularLocation>
</comment>
<comment type="similarity">
    <text evidence="1">Belongs to the MrnC RNase family.</text>
</comment>
<evidence type="ECO:0000255" key="1">
    <source>
        <dbReference type="HAMAP-Rule" id="MF_01468"/>
    </source>
</evidence>
<evidence type="ECO:0007829" key="2">
    <source>
        <dbReference type="PDB" id="1U61"/>
    </source>
</evidence>
<gene>
    <name evidence="1" type="primary">mrnC</name>
    <name type="ordered locus">BC_0111</name>
</gene>
<accession>Q81J58</accession>
<sequence length="135" mass="15290">MIDAKQLNSLALAYMGDAVYEQYIRYHLLQKGKVRPNQLHRLGTSFVSAKAQAKVVYHLLETAFLTEEEEAVLRRGRNANSGTVPKNTDVQTYRHSTAFEALIGYHHLLNNRERLDEIVYKAIAVLEEQEGGTSS</sequence>
<name>MRNC_BACCR</name>
<organism>
    <name type="scientific">Bacillus cereus (strain ATCC 14579 / DSM 31 / CCUG 7414 / JCM 2152 / NBRC 15305 / NCIMB 9373 / NCTC 2599 / NRRL B-3711)</name>
    <dbReference type="NCBI Taxonomy" id="226900"/>
    <lineage>
        <taxon>Bacteria</taxon>
        <taxon>Bacillati</taxon>
        <taxon>Bacillota</taxon>
        <taxon>Bacilli</taxon>
        <taxon>Bacillales</taxon>
        <taxon>Bacillaceae</taxon>
        <taxon>Bacillus</taxon>
        <taxon>Bacillus cereus group</taxon>
    </lineage>
</organism>